<organism>
    <name type="scientific">Xanthomonas campestris pv. campestris (strain ATCC 33913 / DSM 3586 / NCPPB 528 / LMG 568 / P 25)</name>
    <dbReference type="NCBI Taxonomy" id="190485"/>
    <lineage>
        <taxon>Bacteria</taxon>
        <taxon>Pseudomonadati</taxon>
        <taxon>Pseudomonadota</taxon>
        <taxon>Gammaproteobacteria</taxon>
        <taxon>Lysobacterales</taxon>
        <taxon>Lysobacteraceae</taxon>
        <taxon>Xanthomonas</taxon>
    </lineage>
</organism>
<reference key="1">
    <citation type="journal article" date="2002" name="Nature">
        <title>Comparison of the genomes of two Xanthomonas pathogens with differing host specificities.</title>
        <authorList>
            <person name="da Silva A.C.R."/>
            <person name="Ferro J.A."/>
            <person name="Reinach F.C."/>
            <person name="Farah C.S."/>
            <person name="Furlan L.R."/>
            <person name="Quaggio R.B."/>
            <person name="Monteiro-Vitorello C.B."/>
            <person name="Van Sluys M.A."/>
            <person name="Almeida N.F. Jr."/>
            <person name="Alves L.M.C."/>
            <person name="do Amaral A.M."/>
            <person name="Bertolini M.C."/>
            <person name="Camargo L.E.A."/>
            <person name="Camarotte G."/>
            <person name="Cannavan F."/>
            <person name="Cardozo J."/>
            <person name="Chambergo F."/>
            <person name="Ciapina L.P."/>
            <person name="Cicarelli R.M.B."/>
            <person name="Coutinho L.L."/>
            <person name="Cursino-Santos J.R."/>
            <person name="El-Dorry H."/>
            <person name="Faria J.B."/>
            <person name="Ferreira A.J.S."/>
            <person name="Ferreira R.C.C."/>
            <person name="Ferro M.I.T."/>
            <person name="Formighieri E.F."/>
            <person name="Franco M.C."/>
            <person name="Greggio C.C."/>
            <person name="Gruber A."/>
            <person name="Katsuyama A.M."/>
            <person name="Kishi L.T."/>
            <person name="Leite R.P."/>
            <person name="Lemos E.G.M."/>
            <person name="Lemos M.V.F."/>
            <person name="Locali E.C."/>
            <person name="Machado M.A."/>
            <person name="Madeira A.M.B.N."/>
            <person name="Martinez-Rossi N.M."/>
            <person name="Martins E.C."/>
            <person name="Meidanis J."/>
            <person name="Menck C.F.M."/>
            <person name="Miyaki C.Y."/>
            <person name="Moon D.H."/>
            <person name="Moreira L.M."/>
            <person name="Novo M.T.M."/>
            <person name="Okura V.K."/>
            <person name="Oliveira M.C."/>
            <person name="Oliveira V.R."/>
            <person name="Pereira H.A."/>
            <person name="Rossi A."/>
            <person name="Sena J.A.D."/>
            <person name="Silva C."/>
            <person name="de Souza R.F."/>
            <person name="Spinola L.A.F."/>
            <person name="Takita M.A."/>
            <person name="Tamura R.E."/>
            <person name="Teixeira E.C."/>
            <person name="Tezza R.I.D."/>
            <person name="Trindade dos Santos M."/>
            <person name="Truffi D."/>
            <person name="Tsai S.M."/>
            <person name="White F.F."/>
            <person name="Setubal J.C."/>
            <person name="Kitajima J.P."/>
        </authorList>
    </citation>
    <scope>NUCLEOTIDE SEQUENCE [LARGE SCALE GENOMIC DNA]</scope>
    <source>
        <strain>ATCC 33913 / DSM 3586 / NCPPB 528 / LMG 568 / P 25</strain>
    </source>
</reference>
<evidence type="ECO:0000255" key="1">
    <source>
        <dbReference type="HAMAP-Rule" id="MF_01807"/>
    </source>
</evidence>
<evidence type="ECO:0000255" key="2">
    <source>
        <dbReference type="PROSITE-ProRule" id="PRU01246"/>
    </source>
</evidence>
<evidence type="ECO:0000255" key="3">
    <source>
        <dbReference type="PROSITE-ProRule" id="PRU01248"/>
    </source>
</evidence>
<sequence>MSASSPAERRQRAQQLPPLRAEDDQAIQRFLDRLWAEQGVARQTLDSYRRDLEGLARWRDGAGGGLQGADRSALFDYLRWRTEARYAPRSNARLLSTLRGFYALCLRDGVRSDDPTALLDPPRLPRSLPKALTESQIDALLAAPEIGTPLGLRDRAMLELMYAAGLRVSELVTLPAVAINLRQGVLRVTGKGSKERLVPLGEESQHWLERYLETARPTLSERKAVPAVDGQVPLFIDAARRPLSRQQFWGLVKRYAAVAGIDPDTVSPHGLRHSFATHLLNHGADLRALQMLLGHSSLSTTQIYTLVARQHLQTLHARHHPRG</sequence>
<accession>Q8PCQ9</accession>
<gene>
    <name evidence="1" type="primary">xerD</name>
    <name type="ordered locus">XCC0654</name>
</gene>
<keyword id="KW-0131">Cell cycle</keyword>
<keyword id="KW-0132">Cell division</keyword>
<keyword id="KW-0159">Chromosome partition</keyword>
<keyword id="KW-0963">Cytoplasm</keyword>
<keyword id="KW-0229">DNA integration</keyword>
<keyword id="KW-0233">DNA recombination</keyword>
<keyword id="KW-0238">DNA-binding</keyword>
<keyword id="KW-1185">Reference proteome</keyword>
<name>XERD_XANCP</name>
<dbReference type="EMBL" id="AE008922">
    <property type="protein sequence ID" value="AAM39970.1"/>
    <property type="molecule type" value="Genomic_DNA"/>
</dbReference>
<dbReference type="RefSeq" id="NP_636046.1">
    <property type="nucleotide sequence ID" value="NC_003902.1"/>
</dbReference>
<dbReference type="RefSeq" id="WP_011035895.1">
    <property type="nucleotide sequence ID" value="NC_003902.1"/>
</dbReference>
<dbReference type="SMR" id="Q8PCQ9"/>
<dbReference type="STRING" id="190485.XCC0654"/>
<dbReference type="EnsemblBacteria" id="AAM39970">
    <property type="protein sequence ID" value="AAM39970"/>
    <property type="gene ID" value="XCC0654"/>
</dbReference>
<dbReference type="KEGG" id="xcc:XCC0654"/>
<dbReference type="PATRIC" id="fig|190485.4.peg.716"/>
<dbReference type="eggNOG" id="COG4974">
    <property type="taxonomic scope" value="Bacteria"/>
</dbReference>
<dbReference type="HOGENOM" id="CLU_027562_9_0_6"/>
<dbReference type="OrthoDB" id="9801717at2"/>
<dbReference type="Proteomes" id="UP000001010">
    <property type="component" value="Chromosome"/>
</dbReference>
<dbReference type="GO" id="GO:0005737">
    <property type="term" value="C:cytoplasm"/>
    <property type="evidence" value="ECO:0007669"/>
    <property type="project" value="UniProtKB-SubCell"/>
</dbReference>
<dbReference type="GO" id="GO:0048476">
    <property type="term" value="C:Holliday junction resolvase complex"/>
    <property type="evidence" value="ECO:0000318"/>
    <property type="project" value="GO_Central"/>
</dbReference>
<dbReference type="GO" id="GO:0003677">
    <property type="term" value="F:DNA binding"/>
    <property type="evidence" value="ECO:0000318"/>
    <property type="project" value="GO_Central"/>
</dbReference>
<dbReference type="GO" id="GO:0009037">
    <property type="term" value="F:tyrosine-based site-specific recombinase activity"/>
    <property type="evidence" value="ECO:0000318"/>
    <property type="project" value="GO_Central"/>
</dbReference>
<dbReference type="GO" id="GO:0051301">
    <property type="term" value="P:cell division"/>
    <property type="evidence" value="ECO:0007669"/>
    <property type="project" value="UniProtKB-KW"/>
</dbReference>
<dbReference type="GO" id="GO:0007059">
    <property type="term" value="P:chromosome segregation"/>
    <property type="evidence" value="ECO:0000318"/>
    <property type="project" value="GO_Central"/>
</dbReference>
<dbReference type="GO" id="GO:0006310">
    <property type="term" value="P:DNA recombination"/>
    <property type="evidence" value="ECO:0000318"/>
    <property type="project" value="GO_Central"/>
</dbReference>
<dbReference type="GO" id="GO:0006313">
    <property type="term" value="P:DNA transposition"/>
    <property type="evidence" value="ECO:0007669"/>
    <property type="project" value="UniProtKB-UniRule"/>
</dbReference>
<dbReference type="GO" id="GO:0071139">
    <property type="term" value="P:resolution of DNA recombination intermediates"/>
    <property type="evidence" value="ECO:0000318"/>
    <property type="project" value="GO_Central"/>
</dbReference>
<dbReference type="CDD" id="cd00798">
    <property type="entry name" value="INT_XerDC_C"/>
    <property type="match status" value="1"/>
</dbReference>
<dbReference type="Gene3D" id="1.10.150.130">
    <property type="match status" value="1"/>
</dbReference>
<dbReference type="Gene3D" id="1.10.443.10">
    <property type="entry name" value="Intergrase catalytic core"/>
    <property type="match status" value="1"/>
</dbReference>
<dbReference type="HAMAP" id="MF_01808">
    <property type="entry name" value="Recomb_XerC_XerD"/>
    <property type="match status" value="1"/>
</dbReference>
<dbReference type="HAMAP" id="MF_01807">
    <property type="entry name" value="Recomb_XerD"/>
    <property type="match status" value="1"/>
</dbReference>
<dbReference type="InterPro" id="IPR044068">
    <property type="entry name" value="CB"/>
</dbReference>
<dbReference type="InterPro" id="IPR011010">
    <property type="entry name" value="DNA_brk_join_enz"/>
</dbReference>
<dbReference type="InterPro" id="IPR013762">
    <property type="entry name" value="Integrase-like_cat_sf"/>
</dbReference>
<dbReference type="InterPro" id="IPR002104">
    <property type="entry name" value="Integrase_catalytic"/>
</dbReference>
<dbReference type="InterPro" id="IPR010998">
    <property type="entry name" value="Integrase_recombinase_N"/>
</dbReference>
<dbReference type="InterPro" id="IPR004107">
    <property type="entry name" value="Integrase_SAM-like_N"/>
</dbReference>
<dbReference type="InterPro" id="IPR011932">
    <property type="entry name" value="Recomb_XerD"/>
</dbReference>
<dbReference type="InterPro" id="IPR023009">
    <property type="entry name" value="Tyrosine_recombinase_XerC/XerD"/>
</dbReference>
<dbReference type="InterPro" id="IPR050090">
    <property type="entry name" value="Tyrosine_recombinase_XerCD"/>
</dbReference>
<dbReference type="NCBIfam" id="NF001399">
    <property type="entry name" value="PRK00283.1"/>
    <property type="match status" value="1"/>
</dbReference>
<dbReference type="NCBIfam" id="TIGR02225">
    <property type="entry name" value="recomb_XerD"/>
    <property type="match status" value="1"/>
</dbReference>
<dbReference type="PANTHER" id="PTHR30349">
    <property type="entry name" value="PHAGE INTEGRASE-RELATED"/>
    <property type="match status" value="1"/>
</dbReference>
<dbReference type="PANTHER" id="PTHR30349:SF90">
    <property type="entry name" value="TYROSINE RECOMBINASE XERD"/>
    <property type="match status" value="1"/>
</dbReference>
<dbReference type="Pfam" id="PF02899">
    <property type="entry name" value="Phage_int_SAM_1"/>
    <property type="match status" value="1"/>
</dbReference>
<dbReference type="Pfam" id="PF00589">
    <property type="entry name" value="Phage_integrase"/>
    <property type="match status" value="1"/>
</dbReference>
<dbReference type="SUPFAM" id="SSF56349">
    <property type="entry name" value="DNA breaking-rejoining enzymes"/>
    <property type="match status" value="1"/>
</dbReference>
<dbReference type="SUPFAM" id="SSF47823">
    <property type="entry name" value="lambda integrase-like, N-terminal domain"/>
    <property type="match status" value="1"/>
</dbReference>
<dbReference type="PROSITE" id="PS51900">
    <property type="entry name" value="CB"/>
    <property type="match status" value="1"/>
</dbReference>
<dbReference type="PROSITE" id="PS51898">
    <property type="entry name" value="TYR_RECOMBINASE"/>
    <property type="match status" value="1"/>
</dbReference>
<comment type="function">
    <text evidence="1">Site-specific tyrosine recombinase, which acts by catalyzing the cutting and rejoining of the recombining DNA molecules. The XerC-XerD complex is essential to convert dimers of the bacterial chromosome into monomers to permit their segregation at cell division. It also contributes to the segregational stability of plasmids.</text>
</comment>
<comment type="subunit">
    <text evidence="1">Forms a cyclic heterotetrameric complex composed of two molecules of XerC and two molecules of XerD.</text>
</comment>
<comment type="subcellular location">
    <subcellularLocation>
        <location evidence="1">Cytoplasm</location>
    </subcellularLocation>
</comment>
<comment type="similarity">
    <text evidence="1">Belongs to the 'phage' integrase family. XerD subfamily.</text>
</comment>
<protein>
    <recommendedName>
        <fullName evidence="1">Tyrosine recombinase XerD</fullName>
    </recommendedName>
</protein>
<feature type="chain" id="PRO_0000095431" description="Tyrosine recombinase XerD">
    <location>
        <begin position="1"/>
        <end position="323"/>
    </location>
</feature>
<feature type="domain" description="Core-binding (CB)" evidence="3">
    <location>
        <begin position="21"/>
        <end position="106"/>
    </location>
</feature>
<feature type="domain" description="Tyr recombinase" evidence="2">
    <location>
        <begin position="127"/>
        <end position="317"/>
    </location>
</feature>
<feature type="active site" evidence="1">
    <location>
        <position position="167"/>
    </location>
</feature>
<feature type="active site" evidence="1">
    <location>
        <position position="191"/>
    </location>
</feature>
<feature type="active site" evidence="1">
    <location>
        <position position="269"/>
    </location>
</feature>
<feature type="active site" evidence="1">
    <location>
        <position position="272"/>
    </location>
</feature>
<feature type="active site" evidence="1">
    <location>
        <position position="295"/>
    </location>
</feature>
<feature type="active site" description="O-(3'-phospho-DNA)-tyrosine intermediate" evidence="1">
    <location>
        <position position="304"/>
    </location>
</feature>
<proteinExistence type="inferred from homology"/>